<dbReference type="EC" id="7.1.2.2" evidence="1"/>
<dbReference type="EMBL" id="X61316">
    <property type="protein sequence ID" value="CAA43609.1"/>
    <property type="molecule type" value="Genomic_DNA"/>
</dbReference>
<dbReference type="PIR" id="S15722">
    <property type="entry name" value="PWNTBB"/>
</dbReference>
<dbReference type="SMR" id="P69369"/>
<dbReference type="GO" id="GO:0009535">
    <property type="term" value="C:chloroplast thylakoid membrane"/>
    <property type="evidence" value="ECO:0007669"/>
    <property type="project" value="UniProtKB-SubCell"/>
</dbReference>
<dbReference type="GO" id="GO:0005739">
    <property type="term" value="C:mitochondrion"/>
    <property type="evidence" value="ECO:0007669"/>
    <property type="project" value="GOC"/>
</dbReference>
<dbReference type="GO" id="GO:0045259">
    <property type="term" value="C:proton-transporting ATP synthase complex"/>
    <property type="evidence" value="ECO:0007669"/>
    <property type="project" value="UniProtKB-KW"/>
</dbReference>
<dbReference type="GO" id="GO:0005524">
    <property type="term" value="F:ATP binding"/>
    <property type="evidence" value="ECO:0007669"/>
    <property type="project" value="UniProtKB-UniRule"/>
</dbReference>
<dbReference type="GO" id="GO:0016887">
    <property type="term" value="F:ATP hydrolysis activity"/>
    <property type="evidence" value="ECO:0007669"/>
    <property type="project" value="InterPro"/>
</dbReference>
<dbReference type="GO" id="GO:0046933">
    <property type="term" value="F:proton-transporting ATP synthase activity, rotational mechanism"/>
    <property type="evidence" value="ECO:0007669"/>
    <property type="project" value="UniProtKB-UniRule"/>
</dbReference>
<dbReference type="GO" id="GO:0042776">
    <property type="term" value="P:proton motive force-driven mitochondrial ATP synthesis"/>
    <property type="evidence" value="ECO:0007669"/>
    <property type="project" value="TreeGrafter"/>
</dbReference>
<dbReference type="CDD" id="cd18110">
    <property type="entry name" value="ATP-synt_F1_beta_C"/>
    <property type="match status" value="1"/>
</dbReference>
<dbReference type="CDD" id="cd18115">
    <property type="entry name" value="ATP-synt_F1_beta_N"/>
    <property type="match status" value="1"/>
</dbReference>
<dbReference type="CDD" id="cd01133">
    <property type="entry name" value="F1-ATPase_beta_CD"/>
    <property type="match status" value="1"/>
</dbReference>
<dbReference type="FunFam" id="1.10.1140.10:FF:000001">
    <property type="entry name" value="ATP synthase subunit beta"/>
    <property type="match status" value="1"/>
</dbReference>
<dbReference type="FunFam" id="3.40.50.12240:FF:000006">
    <property type="entry name" value="ATP synthase subunit beta"/>
    <property type="match status" value="1"/>
</dbReference>
<dbReference type="FunFam" id="3.40.50.300:FF:000004">
    <property type="entry name" value="ATP synthase subunit beta"/>
    <property type="match status" value="1"/>
</dbReference>
<dbReference type="FunFam" id="2.40.10.170:FF:000002">
    <property type="entry name" value="ATP synthase subunit beta, chloroplastic"/>
    <property type="match status" value="1"/>
</dbReference>
<dbReference type="Gene3D" id="2.40.10.170">
    <property type="match status" value="1"/>
</dbReference>
<dbReference type="Gene3D" id="1.10.1140.10">
    <property type="entry name" value="Bovine Mitochondrial F1-atpase, Atp Synthase Beta Chain, Chain D, domain 3"/>
    <property type="match status" value="1"/>
</dbReference>
<dbReference type="Gene3D" id="3.40.50.300">
    <property type="entry name" value="P-loop containing nucleotide triphosphate hydrolases"/>
    <property type="match status" value="1"/>
</dbReference>
<dbReference type="HAMAP" id="MF_01347">
    <property type="entry name" value="ATP_synth_beta_bact"/>
    <property type="match status" value="1"/>
</dbReference>
<dbReference type="InterPro" id="IPR003593">
    <property type="entry name" value="AAA+_ATPase"/>
</dbReference>
<dbReference type="InterPro" id="IPR055190">
    <property type="entry name" value="ATP-synt_VA_C"/>
</dbReference>
<dbReference type="InterPro" id="IPR005722">
    <property type="entry name" value="ATP_synth_F1_bsu"/>
</dbReference>
<dbReference type="InterPro" id="IPR020003">
    <property type="entry name" value="ATPase_a/bsu_AS"/>
</dbReference>
<dbReference type="InterPro" id="IPR050053">
    <property type="entry name" value="ATPase_alpha/beta_chains"/>
</dbReference>
<dbReference type="InterPro" id="IPR004100">
    <property type="entry name" value="ATPase_F1/V1/A1_a/bsu_N"/>
</dbReference>
<dbReference type="InterPro" id="IPR036121">
    <property type="entry name" value="ATPase_F1/V1/A1_a/bsu_N_sf"/>
</dbReference>
<dbReference type="InterPro" id="IPR000194">
    <property type="entry name" value="ATPase_F1/V1/A1_a/bsu_nucl-bd"/>
</dbReference>
<dbReference type="InterPro" id="IPR024034">
    <property type="entry name" value="ATPase_F1/V1_b/a_C"/>
</dbReference>
<dbReference type="InterPro" id="IPR027417">
    <property type="entry name" value="P-loop_NTPase"/>
</dbReference>
<dbReference type="NCBIfam" id="TIGR01039">
    <property type="entry name" value="atpD"/>
    <property type="match status" value="1"/>
</dbReference>
<dbReference type="PANTHER" id="PTHR15184">
    <property type="entry name" value="ATP SYNTHASE"/>
    <property type="match status" value="1"/>
</dbReference>
<dbReference type="PANTHER" id="PTHR15184:SF71">
    <property type="entry name" value="ATP SYNTHASE SUBUNIT BETA, MITOCHONDRIAL"/>
    <property type="match status" value="1"/>
</dbReference>
<dbReference type="Pfam" id="PF00006">
    <property type="entry name" value="ATP-synt_ab"/>
    <property type="match status" value="1"/>
</dbReference>
<dbReference type="Pfam" id="PF02874">
    <property type="entry name" value="ATP-synt_ab_N"/>
    <property type="match status" value="1"/>
</dbReference>
<dbReference type="Pfam" id="PF22919">
    <property type="entry name" value="ATP-synt_VA_C"/>
    <property type="match status" value="1"/>
</dbReference>
<dbReference type="SMART" id="SM00382">
    <property type="entry name" value="AAA"/>
    <property type="match status" value="1"/>
</dbReference>
<dbReference type="SUPFAM" id="SSF47917">
    <property type="entry name" value="C-terminal domain of alpha and beta subunits of F1 ATP synthase"/>
    <property type="match status" value="1"/>
</dbReference>
<dbReference type="SUPFAM" id="SSF50615">
    <property type="entry name" value="N-terminal domain of alpha and beta subunits of F1 ATP synthase"/>
    <property type="match status" value="1"/>
</dbReference>
<dbReference type="SUPFAM" id="SSF52540">
    <property type="entry name" value="P-loop containing nucleoside triphosphate hydrolases"/>
    <property type="match status" value="1"/>
</dbReference>
<dbReference type="PROSITE" id="PS00152">
    <property type="entry name" value="ATPASE_ALPHA_BETA"/>
    <property type="match status" value="1"/>
</dbReference>
<feature type="chain" id="PRO_0000144530" description="ATP synthase subunit beta, chloroplastic">
    <location>
        <begin position="1"/>
        <end position="498"/>
    </location>
</feature>
<feature type="binding site" evidence="1">
    <location>
        <begin position="172"/>
        <end position="179"/>
    </location>
    <ligand>
        <name>ATP</name>
        <dbReference type="ChEBI" id="CHEBI:30616"/>
    </ligand>
</feature>
<comment type="function">
    <text evidence="1">Produces ATP from ADP in the presence of a proton gradient across the membrane. The catalytic sites are hosted primarily by the beta subunits.</text>
</comment>
<comment type="catalytic activity">
    <reaction evidence="1">
        <text>ATP + H2O + 4 H(+)(in) = ADP + phosphate + 5 H(+)(out)</text>
        <dbReference type="Rhea" id="RHEA:57720"/>
        <dbReference type="ChEBI" id="CHEBI:15377"/>
        <dbReference type="ChEBI" id="CHEBI:15378"/>
        <dbReference type="ChEBI" id="CHEBI:30616"/>
        <dbReference type="ChEBI" id="CHEBI:43474"/>
        <dbReference type="ChEBI" id="CHEBI:456216"/>
        <dbReference type="EC" id="7.1.2.2"/>
    </reaction>
</comment>
<comment type="subunit">
    <text evidence="1">F-type ATPases have 2 components, CF(1) - the catalytic core - and CF(0) - the membrane proton channel. CF(1) has five subunits: alpha(3), beta(3), gamma(1), delta(1), epsilon(1). CF(0) has four main subunits: a(1), b(1), b'(1) and c(9-12).</text>
</comment>
<comment type="subcellular location">
    <subcellularLocation>
        <location evidence="1">Plastid</location>
        <location evidence="1">Chloroplast thylakoid membrane</location>
        <topology evidence="1">Peripheral membrane protein</topology>
    </subcellularLocation>
</comment>
<comment type="similarity">
    <text evidence="1">Belongs to the ATPase alpha/beta chains family.</text>
</comment>
<keyword id="KW-0066">ATP synthesis</keyword>
<keyword id="KW-0067">ATP-binding</keyword>
<keyword id="KW-0139">CF(1)</keyword>
<keyword id="KW-0150">Chloroplast</keyword>
<keyword id="KW-0375">Hydrogen ion transport</keyword>
<keyword id="KW-0406">Ion transport</keyword>
<keyword id="KW-0472">Membrane</keyword>
<keyword id="KW-0547">Nucleotide-binding</keyword>
<keyword id="KW-0934">Plastid</keyword>
<keyword id="KW-0793">Thylakoid</keyword>
<keyword id="KW-1278">Translocase</keyword>
<keyword id="KW-0813">Transport</keyword>
<protein>
    <recommendedName>
        <fullName evidence="1">ATP synthase subunit beta, chloroplastic</fullName>
        <ecNumber evidence="1">7.1.2.2</ecNumber>
    </recommendedName>
    <alternativeName>
        <fullName evidence="1">ATP synthase F1 sector subunit beta</fullName>
    </alternativeName>
    <alternativeName>
        <fullName evidence="1">F-ATPase subunit beta</fullName>
    </alternativeName>
</protein>
<reference key="1">
    <citation type="journal article" date="1992" name="Science">
        <title>Tentoxin sensitivity of chloroplasts determined by codon 83 of beta subunit of proton-ATPase.</title>
        <authorList>
            <person name="Avni A."/>
            <person name="Anderson J.D."/>
            <person name="Holland N."/>
            <person name="Rochaix J.-D."/>
            <person name="Gromet-Elhanan Z."/>
            <person name="Edelman M."/>
        </authorList>
    </citation>
    <scope>NUCLEOTIDE SEQUENCE [GENOMIC DNA]</scope>
</reference>
<sequence length="498" mass="53525">MRINPTTSGSGVSTLEKKNPGRVVQIIGPVLDVAFPPGKMPNIYNALVVQGRDSVGQPINVACEVQQLLGNNRVRAVAMSATDGLTRGMEVIDTGAPISVPVGGATLGRIFNVLGEPVDNLGPVDTSTTSPIHRSAPAFIQLDTKLSIFETGIKVVDLLAPYRRGGKIGLFGGAGVGKTVLIMELINNIAKAHGGVSVFGGVGERTREGNDLYMEMKESGVINEENIAESKVALVYGQMNEPPGARMRVGLTALTMAEYFRDVNEQDVLLFIDNIFRFVQAGSEVSALLGRMPSAVGYQPTLSTEMGSLQERITSTKEGSITSIQAVYVPADDLTDPAPATTFAHLDATTVLSRGLAAKGIYPAVDPLDSTSTMLQPRIVGEEHYETAQRVKQTLQRYKELQDIIAILGLDELSEEDRLLVARARKIERFLSQPFFVAEVFTGSPGKYVGLAETIRGFQLILSGELDGLPEQAFYLVGNIDEATAKAMNLEMESNLKK</sequence>
<organism>
    <name type="scientific">Nicotiana bigelovii</name>
    <name type="common">Bigelov's tobacco</name>
    <dbReference type="NCBI Taxonomy" id="4088"/>
    <lineage>
        <taxon>Eukaryota</taxon>
        <taxon>Viridiplantae</taxon>
        <taxon>Streptophyta</taxon>
        <taxon>Embryophyta</taxon>
        <taxon>Tracheophyta</taxon>
        <taxon>Spermatophyta</taxon>
        <taxon>Magnoliopsida</taxon>
        <taxon>eudicotyledons</taxon>
        <taxon>Gunneridae</taxon>
        <taxon>Pentapetalae</taxon>
        <taxon>asterids</taxon>
        <taxon>lamiids</taxon>
        <taxon>Solanales</taxon>
        <taxon>Solanaceae</taxon>
        <taxon>Nicotianoideae</taxon>
        <taxon>Nicotianeae</taxon>
        <taxon>Nicotiana</taxon>
    </lineage>
</organism>
<name>ATPB_NICBI</name>
<geneLocation type="chloroplast"/>
<accession>P69369</accession>
<accession>P26529</accession>
<gene>
    <name evidence="1" type="primary">atpB</name>
</gene>
<proteinExistence type="inferred from homology"/>
<evidence type="ECO:0000255" key="1">
    <source>
        <dbReference type="HAMAP-Rule" id="MF_01347"/>
    </source>
</evidence>